<reference key="1">
    <citation type="journal article" date="1993" name="J. Biol. Chem.">
        <title>Molecular basis of the alcohol dehydrogenase-negative deer mouse. Evidence for deletion of the gene for class I enzyme and identification of a possible new enzyme class.</title>
        <authorList>
            <person name="Zheng Y.W."/>
            <person name="Bey M."/>
            <person name="Liu H."/>
            <person name="Felder M.R."/>
        </authorList>
    </citation>
    <scope>NUCLEOTIDE SEQUENCE [MRNA]</scope>
    <scope>FUNCTION</scope>
    <scope>SUBUNIT</scope>
    <scope>TISSUE SPECIFICITY</scope>
    <source>
        <tissue>Liver</tissue>
    </source>
</reference>
<proteinExistence type="evidence at protein level"/>
<sequence>MSTAGKVIRCKAAVLWKPGAPLTMEEIDVAPPKGKEVRVKMVAAGICGTDIKSLDNKKLAPFCPIIMGHEGTGIVESVGEGVSTVKTGDKVIILCLPQCGECNTCLNSKNNICKEVRLSGTHLTSEGNSRITCKGKTTYQYITTGTFSEYIVIKEISVAKVDEDALLEKACIIGCGFATGFGAAINSAKVSPGSTCAVFGLGGVGLSVIMGCKAAGAARIIAVDTNKDKFAKAKTVGATECIDPQDFEKPIQQVLFDMMNDGADFTFEVTGNPETVETALASCHKDHGVCVIVGSLASWIQLNINSHLFFSGRTLKGSVLGGWKTKEEIPKLVSDYTAKKFNLDPLITHTLTLDKVNEAIQLMKNGQCIRCVLLP</sequence>
<feature type="chain" id="PRO_0000160689" description="Alcohol dehydrogenase 6">
    <location>
        <begin position="1"/>
        <end position="375"/>
    </location>
</feature>
<feature type="binding site" evidence="1">
    <location>
        <position position="47"/>
    </location>
    <ligand>
        <name>Zn(2+)</name>
        <dbReference type="ChEBI" id="CHEBI:29105"/>
        <label>1</label>
        <note>catalytic</note>
    </ligand>
</feature>
<feature type="binding site" evidence="1">
    <location>
        <position position="69"/>
    </location>
    <ligand>
        <name>Zn(2+)</name>
        <dbReference type="ChEBI" id="CHEBI:29105"/>
        <label>1</label>
        <note>catalytic</note>
    </ligand>
</feature>
<feature type="binding site" evidence="1">
    <location>
        <position position="99"/>
    </location>
    <ligand>
        <name>Zn(2+)</name>
        <dbReference type="ChEBI" id="CHEBI:29105"/>
        <label>2</label>
    </ligand>
</feature>
<feature type="binding site" evidence="1">
    <location>
        <position position="102"/>
    </location>
    <ligand>
        <name>Zn(2+)</name>
        <dbReference type="ChEBI" id="CHEBI:29105"/>
        <label>2</label>
    </ligand>
</feature>
<feature type="binding site" evidence="1">
    <location>
        <position position="105"/>
    </location>
    <ligand>
        <name>Zn(2+)</name>
        <dbReference type="ChEBI" id="CHEBI:29105"/>
        <label>2</label>
    </ligand>
</feature>
<feature type="binding site" evidence="1">
    <location>
        <position position="113"/>
    </location>
    <ligand>
        <name>Zn(2+)</name>
        <dbReference type="ChEBI" id="CHEBI:29105"/>
        <label>2</label>
    </ligand>
</feature>
<feature type="binding site" evidence="1">
    <location>
        <position position="175"/>
    </location>
    <ligand>
        <name>Zn(2+)</name>
        <dbReference type="ChEBI" id="CHEBI:29105"/>
        <label>1</label>
        <note>catalytic</note>
    </ligand>
</feature>
<feature type="binding site" evidence="1">
    <location>
        <begin position="200"/>
        <end position="205"/>
    </location>
    <ligand>
        <name>NAD(+)</name>
        <dbReference type="ChEBI" id="CHEBI:57540"/>
    </ligand>
</feature>
<feature type="binding site" evidence="1">
    <location>
        <position position="224"/>
    </location>
    <ligand>
        <name>NAD(+)</name>
        <dbReference type="ChEBI" id="CHEBI:57540"/>
    </ligand>
</feature>
<feature type="binding site" evidence="1">
    <location>
        <position position="229"/>
    </location>
    <ligand>
        <name>NAD(+)</name>
        <dbReference type="ChEBI" id="CHEBI:57540"/>
    </ligand>
</feature>
<feature type="binding site" evidence="1">
    <location>
        <begin position="293"/>
        <end position="295"/>
    </location>
    <ligand>
        <name>NAD(+)</name>
        <dbReference type="ChEBI" id="CHEBI:57540"/>
    </ligand>
</feature>
<feature type="binding site" evidence="1">
    <location>
        <position position="370"/>
    </location>
    <ligand>
        <name>NAD(+)</name>
        <dbReference type="ChEBI" id="CHEBI:57540"/>
    </ligand>
</feature>
<name>ADH6_PERMA</name>
<accession>P41681</accession>
<organism>
    <name type="scientific">Peromyscus maniculatus</name>
    <name type="common">North American deer mouse</name>
    <dbReference type="NCBI Taxonomy" id="10042"/>
    <lineage>
        <taxon>Eukaryota</taxon>
        <taxon>Metazoa</taxon>
        <taxon>Chordata</taxon>
        <taxon>Craniata</taxon>
        <taxon>Vertebrata</taxon>
        <taxon>Euteleostomi</taxon>
        <taxon>Mammalia</taxon>
        <taxon>Eutheria</taxon>
        <taxon>Euarchontoglires</taxon>
        <taxon>Glires</taxon>
        <taxon>Rodentia</taxon>
        <taxon>Myomorpha</taxon>
        <taxon>Muroidea</taxon>
        <taxon>Cricetidae</taxon>
        <taxon>Neotominae</taxon>
        <taxon>Peromyscus</taxon>
    </lineage>
</organism>
<keyword id="KW-0963">Cytoplasm</keyword>
<keyword id="KW-0479">Metal-binding</keyword>
<keyword id="KW-0520">NAD</keyword>
<keyword id="KW-0560">Oxidoreductase</keyword>
<keyword id="KW-0862">Zinc</keyword>
<evidence type="ECO:0000250" key="1">
    <source>
        <dbReference type="UniProtKB" id="P07327"/>
    </source>
</evidence>
<evidence type="ECO:0000250" key="2">
    <source>
        <dbReference type="UniProtKB" id="P28332"/>
    </source>
</evidence>
<evidence type="ECO:0000269" key="3">
    <source>
    </source>
</evidence>
<evidence type="ECO:0000305" key="4"/>
<protein>
    <recommendedName>
        <fullName>Alcohol dehydrogenase 6</fullName>
        <ecNumber evidence="2">1.1.1.1</ecNumber>
    </recommendedName>
    <alternativeName>
        <fullName>Alcohol dehydrogenase 2</fullName>
        <shortName>ADH-2</shortName>
    </alternativeName>
</protein>
<gene>
    <name type="primary">ADH6</name>
</gene>
<dbReference type="EC" id="1.1.1.1" evidence="2"/>
<dbReference type="EMBL" id="L15704">
    <property type="protein sequence ID" value="AAA40592.1"/>
    <property type="molecule type" value="mRNA"/>
</dbReference>
<dbReference type="PIR" id="B49107">
    <property type="entry name" value="B49107"/>
</dbReference>
<dbReference type="SMR" id="P41681"/>
<dbReference type="GO" id="GO:0005829">
    <property type="term" value="C:cytosol"/>
    <property type="evidence" value="ECO:0007669"/>
    <property type="project" value="TreeGrafter"/>
</dbReference>
<dbReference type="GO" id="GO:0004745">
    <property type="term" value="F:all-trans-retinol dehydrogenase (NAD+) activity"/>
    <property type="evidence" value="ECO:0007669"/>
    <property type="project" value="TreeGrafter"/>
</dbReference>
<dbReference type="GO" id="GO:0008270">
    <property type="term" value="F:zinc ion binding"/>
    <property type="evidence" value="ECO:0007669"/>
    <property type="project" value="InterPro"/>
</dbReference>
<dbReference type="GO" id="GO:0042573">
    <property type="term" value="P:retinoic acid metabolic process"/>
    <property type="evidence" value="ECO:0007669"/>
    <property type="project" value="TreeGrafter"/>
</dbReference>
<dbReference type="GO" id="GO:0042572">
    <property type="term" value="P:retinol metabolic process"/>
    <property type="evidence" value="ECO:0007669"/>
    <property type="project" value="TreeGrafter"/>
</dbReference>
<dbReference type="CDD" id="cd08299">
    <property type="entry name" value="alcohol_DH_class_I_II_IV"/>
    <property type="match status" value="1"/>
</dbReference>
<dbReference type="FunFam" id="3.90.180.10:FF:000067">
    <property type="entry name" value="alcohol dehydrogenase 1-like isoform X1"/>
    <property type="match status" value="1"/>
</dbReference>
<dbReference type="FunFam" id="3.40.50.720:FF:000003">
    <property type="entry name" value="S-(hydroxymethyl)glutathione dehydrogenase"/>
    <property type="match status" value="1"/>
</dbReference>
<dbReference type="Gene3D" id="3.90.180.10">
    <property type="entry name" value="Medium-chain alcohol dehydrogenases, catalytic domain"/>
    <property type="match status" value="1"/>
</dbReference>
<dbReference type="Gene3D" id="3.40.50.720">
    <property type="entry name" value="NAD(P)-binding Rossmann-like Domain"/>
    <property type="match status" value="1"/>
</dbReference>
<dbReference type="InterPro" id="IPR013149">
    <property type="entry name" value="ADH-like_C"/>
</dbReference>
<dbReference type="InterPro" id="IPR013154">
    <property type="entry name" value="ADH-like_N"/>
</dbReference>
<dbReference type="InterPro" id="IPR002328">
    <property type="entry name" value="ADH_Zn_CS"/>
</dbReference>
<dbReference type="InterPro" id="IPR011032">
    <property type="entry name" value="GroES-like_sf"/>
</dbReference>
<dbReference type="InterPro" id="IPR036291">
    <property type="entry name" value="NAD(P)-bd_dom_sf"/>
</dbReference>
<dbReference type="PANTHER" id="PTHR43880">
    <property type="entry name" value="ALCOHOL DEHYDROGENASE"/>
    <property type="match status" value="1"/>
</dbReference>
<dbReference type="PANTHER" id="PTHR43880:SF20">
    <property type="entry name" value="ALCOHOL DEHYDROGENASE 6"/>
    <property type="match status" value="1"/>
</dbReference>
<dbReference type="Pfam" id="PF08240">
    <property type="entry name" value="ADH_N"/>
    <property type="match status" value="1"/>
</dbReference>
<dbReference type="Pfam" id="PF00107">
    <property type="entry name" value="ADH_zinc_N"/>
    <property type="match status" value="1"/>
</dbReference>
<dbReference type="SUPFAM" id="SSF50129">
    <property type="entry name" value="GroES-like"/>
    <property type="match status" value="2"/>
</dbReference>
<dbReference type="SUPFAM" id="SSF51735">
    <property type="entry name" value="NAD(P)-binding Rossmann-fold domains"/>
    <property type="match status" value="1"/>
</dbReference>
<dbReference type="PROSITE" id="PS00059">
    <property type="entry name" value="ADH_ZINC"/>
    <property type="match status" value="1"/>
</dbReference>
<comment type="function">
    <text evidence="1 2 3">Alcohol dehydrogenase (PubMed:8227055). Catalyzes the NAD-dependent oxidation of primary alcohols to the corresponding aldehydes (By similarity). Oxidizes secondary alcohols to the corresponding ketones (By similarity).</text>
</comment>
<comment type="catalytic activity">
    <reaction evidence="2">
        <text>a primary alcohol + NAD(+) = an aldehyde + NADH + H(+)</text>
        <dbReference type="Rhea" id="RHEA:10736"/>
        <dbReference type="ChEBI" id="CHEBI:15378"/>
        <dbReference type="ChEBI" id="CHEBI:15734"/>
        <dbReference type="ChEBI" id="CHEBI:17478"/>
        <dbReference type="ChEBI" id="CHEBI:57540"/>
        <dbReference type="ChEBI" id="CHEBI:57945"/>
        <dbReference type="EC" id="1.1.1.1"/>
    </reaction>
</comment>
<comment type="catalytic activity">
    <reaction evidence="1">
        <text>a secondary alcohol + NAD(+) = a ketone + NADH + H(+)</text>
        <dbReference type="Rhea" id="RHEA:10740"/>
        <dbReference type="ChEBI" id="CHEBI:15378"/>
        <dbReference type="ChEBI" id="CHEBI:17087"/>
        <dbReference type="ChEBI" id="CHEBI:35681"/>
        <dbReference type="ChEBI" id="CHEBI:57540"/>
        <dbReference type="ChEBI" id="CHEBI:57945"/>
        <dbReference type="EC" id="1.1.1.1"/>
    </reaction>
</comment>
<comment type="cofactor">
    <cofactor evidence="1">
        <name>Zn(2+)</name>
        <dbReference type="ChEBI" id="CHEBI:29105"/>
    </cofactor>
    <text evidence="1">Binds 2 Zn(2+) ions per subunit.</text>
</comment>
<comment type="subunit">
    <text evidence="3">Dimer.</text>
</comment>
<comment type="subcellular location">
    <subcellularLocation>
        <location>Cytoplasm</location>
    </subcellularLocation>
</comment>
<comment type="tissue specificity">
    <text evidence="3">Liver.</text>
</comment>
<comment type="similarity">
    <text evidence="4">Belongs to the zinc-containing alcohol dehydrogenase family. Class-V subfamily.</text>
</comment>